<reference key="1">
    <citation type="journal article" date="1985" name="J. Biol. Chem.">
        <title>Two partially homologous adjacent light-inducible maize chloroplast genes encoding polypeptides of the P700 chlorophyll a-protein complex of photosystem I.</title>
        <authorList>
            <person name="Fish L.E."/>
            <person name="Kuck U."/>
            <person name="Bogorad L."/>
        </authorList>
    </citation>
    <scope>NUCLEOTIDE SEQUENCE [LARGE SCALE GENOMIC DNA]</scope>
    <source>
        <strain>cv. B73</strain>
    </source>
</reference>
<reference key="2">
    <citation type="journal article" date="1995" name="J. Mol. Biol.">
        <title>Complete sequence of the maize chloroplast genome: gene content, hotspots of divergence and fine tuning of genetic information by transcript editing.</title>
        <authorList>
            <person name="Maier R.M."/>
            <person name="Neckermann K."/>
            <person name="Igloi G.L."/>
            <person name="Koessel H."/>
        </authorList>
    </citation>
    <scope>NUCLEOTIDE SEQUENCE [LARGE SCALE GENOMIC DNA]</scope>
    <source>
        <strain>cv. B73</strain>
    </source>
</reference>
<proteinExistence type="inferred from homology"/>
<accession>P04967</accession>
<keyword id="KW-0004">4Fe-4S</keyword>
<keyword id="KW-0148">Chlorophyll</keyword>
<keyword id="KW-0150">Chloroplast</keyword>
<keyword id="KW-0157">Chromophore</keyword>
<keyword id="KW-0249">Electron transport</keyword>
<keyword id="KW-0408">Iron</keyword>
<keyword id="KW-0411">Iron-sulfur</keyword>
<keyword id="KW-0460">Magnesium</keyword>
<keyword id="KW-0472">Membrane</keyword>
<keyword id="KW-0479">Metal-binding</keyword>
<keyword id="KW-0560">Oxidoreductase</keyword>
<keyword id="KW-0602">Photosynthesis</keyword>
<keyword id="KW-0603">Photosystem I</keyword>
<keyword id="KW-0934">Plastid</keyword>
<keyword id="KW-1185">Reference proteome</keyword>
<keyword id="KW-0793">Thylakoid</keyword>
<keyword id="KW-0812">Transmembrane</keyword>
<keyword id="KW-1133">Transmembrane helix</keyword>
<keyword id="KW-0813">Transport</keyword>
<comment type="function">
    <text evidence="1">PsaA and PsaB bind P700, the primary electron donor of photosystem I (PSI), as well as the electron acceptors A0, A1 and FX. PSI is a plastocyanin-ferredoxin oxidoreductase, converting photonic excitation into a charge separation, which transfers an electron from the donor P700 chlorophyll pair to the spectroscopically characterized acceptors A0, A1, FX, FA and FB in turn. Oxidized P700 is reduced on the lumenal side of the thylakoid membrane by plastocyanin.</text>
</comment>
<comment type="catalytic activity">
    <reaction evidence="1">
        <text>reduced [plastocyanin] + hnu + oxidized [2Fe-2S]-[ferredoxin] = oxidized [plastocyanin] + reduced [2Fe-2S]-[ferredoxin]</text>
        <dbReference type="Rhea" id="RHEA:30407"/>
        <dbReference type="Rhea" id="RHEA-COMP:10000"/>
        <dbReference type="Rhea" id="RHEA-COMP:10001"/>
        <dbReference type="Rhea" id="RHEA-COMP:10039"/>
        <dbReference type="Rhea" id="RHEA-COMP:10040"/>
        <dbReference type="ChEBI" id="CHEBI:29036"/>
        <dbReference type="ChEBI" id="CHEBI:30212"/>
        <dbReference type="ChEBI" id="CHEBI:33737"/>
        <dbReference type="ChEBI" id="CHEBI:33738"/>
        <dbReference type="ChEBI" id="CHEBI:49552"/>
        <dbReference type="EC" id="1.97.1.12"/>
    </reaction>
</comment>
<comment type="cofactor">
    <text evidence="1">P700 is a chlorophyll a/chlorophyll a' dimer, A0 is one or more chlorophyll a, A1 is one or both phylloquinones and FX is a shared 4Fe-4S iron-sulfur center.</text>
</comment>
<comment type="subunit">
    <text evidence="1">The PsaA/B heterodimer binds the P700 chlorophyll special pair and subsequent electron acceptors. PSI consists of a core antenna complex that captures photons, and an electron transfer chain that converts photonic excitation into a charge separation. The eukaryotic PSI reaction center is composed of at least 11 subunits.</text>
</comment>
<comment type="subcellular location">
    <subcellularLocation>
        <location evidence="1">Plastid</location>
        <location evidence="1">Chloroplast thylakoid membrane</location>
        <topology evidence="1">Multi-pass membrane protein</topology>
    </subcellularLocation>
</comment>
<comment type="similarity">
    <text evidence="1">Belongs to the PsaA/PsaB family.</text>
</comment>
<name>PSAB_MAIZE</name>
<evidence type="ECO:0000255" key="1">
    <source>
        <dbReference type="HAMAP-Rule" id="MF_00482"/>
    </source>
</evidence>
<sequence length="735" mass="82657">MELRFPRFSQGLAQDPTTRRIWFGIATAHDFESHDDITEERLYQNIFASHFGQLAIIFLWTSGNLFHVAWQGNFESWIQDPLHVRPIAHAIWDPHFGQPAVEAFTRGGAAGPVNIAYSGVYQWWYTIGLRTNEDLYTGALFLLFLSTLSLIGGWLHLQPKWKPSLSWFKNAESRLNHHLSGLFGVSSLAWTGHLVHVAIPGSSRGEYVRWNNFLDVLPYPQGLGPLLTGQWNLYAQNPDSSNHLFGTTQGAGTAILTLLGGFHPQTQSLWLTDIAHHHLAIAFIFLIAGHMYRTNFGIGHSIKDLLEAHTPPGGRLGRGHKGLYDTINNSIHFQLGLALASLGVITSLVAQHMYSLPAYAFIAQDFTTQAALYTHHQYIAGFIMTGAFAHGAIFFIRDYNPEQNEDNVLARMLDHKEAIISHLSWASLFLGFHTLGPYVHNDVMLAFGTPEKQILIEPIFAQWIQSAHGKTTYGFDILLSSTNGPTFNAGRNIWLPGWLNAVNENSNSLFLTIGPGDFLVHHAIALGLHTTTLILVKGALDARGSKLMPDKKDFGYSFPCDGPGRGGTCDISAWDAFYLAVFWMLNTIGWVTFYWHWKHITLWQGNVSQFNESSTYLMGWLRDYLWLNSSQLINGYNPFGMNSLSVWAWMFLFGHLVWATGFMFLISWRGYWQELIETLAWAHERTPLANLIRWRDKPVALSVVQARLVGLAHFSVGYIFTYAAFLIASTSGKFG</sequence>
<dbReference type="EC" id="1.97.1.12" evidence="1"/>
<dbReference type="EMBL" id="M11203">
    <property type="protein sequence ID" value="AAA84486.1"/>
    <property type="molecule type" value="Genomic_DNA"/>
</dbReference>
<dbReference type="EMBL" id="X86563">
    <property type="protein sequence ID" value="CAA60285.1"/>
    <property type="molecule type" value="Genomic_DNA"/>
</dbReference>
<dbReference type="PIR" id="S58551">
    <property type="entry name" value="S58551"/>
</dbReference>
<dbReference type="RefSeq" id="NP_043024.1">
    <property type="nucleotide sequence ID" value="NC_001666.2"/>
</dbReference>
<dbReference type="SMR" id="P04967"/>
<dbReference type="STRING" id="4577.P04967"/>
<dbReference type="GeneID" id="845196"/>
<dbReference type="KEGG" id="zma:845196"/>
<dbReference type="MaizeGDB" id="57312"/>
<dbReference type="InParanoid" id="P04967"/>
<dbReference type="OrthoDB" id="15at2759"/>
<dbReference type="Proteomes" id="UP000007305">
    <property type="component" value="Chloroplast"/>
</dbReference>
<dbReference type="ExpressionAtlas" id="P04967">
    <property type="expression patterns" value="baseline"/>
</dbReference>
<dbReference type="GO" id="GO:0009535">
    <property type="term" value="C:chloroplast thylakoid membrane"/>
    <property type="evidence" value="ECO:0007669"/>
    <property type="project" value="UniProtKB-SubCell"/>
</dbReference>
<dbReference type="GO" id="GO:0009522">
    <property type="term" value="C:photosystem I"/>
    <property type="evidence" value="ECO:0007669"/>
    <property type="project" value="UniProtKB-KW"/>
</dbReference>
<dbReference type="GO" id="GO:0051539">
    <property type="term" value="F:4 iron, 4 sulfur cluster binding"/>
    <property type="evidence" value="ECO:0007669"/>
    <property type="project" value="UniProtKB-KW"/>
</dbReference>
<dbReference type="GO" id="GO:0016168">
    <property type="term" value="F:chlorophyll binding"/>
    <property type="evidence" value="ECO:0007669"/>
    <property type="project" value="UniProtKB-KW"/>
</dbReference>
<dbReference type="GO" id="GO:0009055">
    <property type="term" value="F:electron transfer activity"/>
    <property type="evidence" value="ECO:0007669"/>
    <property type="project" value="UniProtKB-UniRule"/>
</dbReference>
<dbReference type="GO" id="GO:0000287">
    <property type="term" value="F:magnesium ion binding"/>
    <property type="evidence" value="ECO:0007669"/>
    <property type="project" value="UniProtKB-UniRule"/>
</dbReference>
<dbReference type="GO" id="GO:0016491">
    <property type="term" value="F:oxidoreductase activity"/>
    <property type="evidence" value="ECO:0007669"/>
    <property type="project" value="UniProtKB-KW"/>
</dbReference>
<dbReference type="GO" id="GO:0015979">
    <property type="term" value="P:photosynthesis"/>
    <property type="evidence" value="ECO:0007669"/>
    <property type="project" value="UniProtKB-UniRule"/>
</dbReference>
<dbReference type="FunFam" id="1.20.1130.10:FF:000001">
    <property type="entry name" value="Photosystem I P700 chlorophyll a apoprotein A2"/>
    <property type="match status" value="1"/>
</dbReference>
<dbReference type="Gene3D" id="1.20.1130.10">
    <property type="entry name" value="Photosystem I PsaA/PsaB"/>
    <property type="match status" value="1"/>
</dbReference>
<dbReference type="HAMAP" id="MF_00482">
    <property type="entry name" value="PSI_PsaB"/>
    <property type="match status" value="1"/>
</dbReference>
<dbReference type="InterPro" id="IPR001280">
    <property type="entry name" value="PSI_PsaA/B"/>
</dbReference>
<dbReference type="InterPro" id="IPR020586">
    <property type="entry name" value="PSI_PsaA/B_CS"/>
</dbReference>
<dbReference type="InterPro" id="IPR036408">
    <property type="entry name" value="PSI_PsaA/B_sf"/>
</dbReference>
<dbReference type="InterPro" id="IPR006244">
    <property type="entry name" value="PSI_PsaB"/>
</dbReference>
<dbReference type="NCBIfam" id="TIGR01336">
    <property type="entry name" value="psaB"/>
    <property type="match status" value="1"/>
</dbReference>
<dbReference type="PANTHER" id="PTHR30128">
    <property type="entry name" value="OUTER MEMBRANE PROTEIN, OMPA-RELATED"/>
    <property type="match status" value="1"/>
</dbReference>
<dbReference type="PANTHER" id="PTHR30128:SF19">
    <property type="entry name" value="PHOTOSYSTEM I P700 CHLOROPHYLL A APOPROTEIN A1-RELATED"/>
    <property type="match status" value="1"/>
</dbReference>
<dbReference type="Pfam" id="PF00223">
    <property type="entry name" value="PsaA_PsaB"/>
    <property type="match status" value="1"/>
</dbReference>
<dbReference type="PIRSF" id="PIRSF002905">
    <property type="entry name" value="PSI_A"/>
    <property type="match status" value="1"/>
</dbReference>
<dbReference type="PRINTS" id="PR00257">
    <property type="entry name" value="PHOTSYSPSAAB"/>
</dbReference>
<dbReference type="SUPFAM" id="SSF81558">
    <property type="entry name" value="Photosystem I subunits PsaA/PsaB"/>
    <property type="match status" value="1"/>
</dbReference>
<dbReference type="PROSITE" id="PS00419">
    <property type="entry name" value="PHOTOSYSTEM_I_PSAAB"/>
    <property type="match status" value="1"/>
</dbReference>
<gene>
    <name evidence="1" type="primary">psaB</name>
    <name type="synonym">ps1a2</name>
</gene>
<feature type="chain" id="PRO_0000088620" description="Photosystem I P700 chlorophyll a apoprotein A2">
    <location>
        <begin position="1"/>
        <end position="735"/>
    </location>
</feature>
<feature type="transmembrane region" description="Helical; Name=I" evidence="1">
    <location>
        <begin position="46"/>
        <end position="69"/>
    </location>
</feature>
<feature type="transmembrane region" description="Helical; Name=II" evidence="1">
    <location>
        <begin position="135"/>
        <end position="158"/>
    </location>
</feature>
<feature type="transmembrane region" description="Helical; Name=III" evidence="1">
    <location>
        <begin position="175"/>
        <end position="199"/>
    </location>
</feature>
<feature type="transmembrane region" description="Helical; Name=IV" evidence="1">
    <location>
        <begin position="274"/>
        <end position="292"/>
    </location>
</feature>
<feature type="transmembrane region" description="Helical; Name=V" evidence="1">
    <location>
        <begin position="331"/>
        <end position="354"/>
    </location>
</feature>
<feature type="transmembrane region" description="Helical; Name=VI" evidence="1">
    <location>
        <begin position="370"/>
        <end position="396"/>
    </location>
</feature>
<feature type="transmembrane region" description="Helical; Name=VII" evidence="1">
    <location>
        <begin position="418"/>
        <end position="440"/>
    </location>
</feature>
<feature type="transmembrane region" description="Helical; Name=VIII" evidence="1">
    <location>
        <begin position="518"/>
        <end position="536"/>
    </location>
</feature>
<feature type="transmembrane region" description="Helical; Name=IX" evidence="1">
    <location>
        <begin position="576"/>
        <end position="597"/>
    </location>
</feature>
<feature type="transmembrane region" description="Helical; Name=X" evidence="1">
    <location>
        <begin position="644"/>
        <end position="666"/>
    </location>
</feature>
<feature type="transmembrane region" description="Helical; Name=XI" evidence="1">
    <location>
        <begin position="708"/>
        <end position="728"/>
    </location>
</feature>
<feature type="binding site" evidence="1">
    <location>
        <position position="560"/>
    </location>
    <ligand>
        <name>[4Fe-4S] cluster</name>
        <dbReference type="ChEBI" id="CHEBI:49883"/>
        <note>ligand shared between dimeric partners</note>
    </ligand>
</feature>
<feature type="binding site" evidence="1">
    <location>
        <position position="569"/>
    </location>
    <ligand>
        <name>[4Fe-4S] cluster</name>
        <dbReference type="ChEBI" id="CHEBI:49883"/>
        <note>ligand shared between dimeric partners</note>
    </ligand>
</feature>
<feature type="binding site" description="axial binding residue" evidence="1">
    <location>
        <position position="655"/>
    </location>
    <ligand>
        <name>chlorophyll a</name>
        <dbReference type="ChEBI" id="CHEBI:58416"/>
        <label>B1</label>
    </ligand>
    <ligandPart>
        <name>Mg</name>
        <dbReference type="ChEBI" id="CHEBI:25107"/>
    </ligandPart>
</feature>
<feature type="binding site" description="axial binding residue" evidence="1">
    <location>
        <position position="663"/>
    </location>
    <ligand>
        <name>chlorophyll a</name>
        <dbReference type="ChEBI" id="CHEBI:58416"/>
        <label>B3</label>
    </ligand>
    <ligandPart>
        <name>Mg</name>
        <dbReference type="ChEBI" id="CHEBI:25107"/>
    </ligandPart>
</feature>
<feature type="binding site" evidence="1">
    <location>
        <position position="671"/>
    </location>
    <ligand>
        <name>chlorophyll a</name>
        <dbReference type="ChEBI" id="CHEBI:58416"/>
        <label>B3</label>
    </ligand>
</feature>
<feature type="binding site" evidence="1">
    <location>
        <position position="672"/>
    </location>
    <ligand>
        <name>phylloquinone</name>
        <dbReference type="ChEBI" id="CHEBI:18067"/>
        <label>B</label>
    </ligand>
</feature>
<organism>
    <name type="scientific">Zea mays</name>
    <name type="common">Maize</name>
    <dbReference type="NCBI Taxonomy" id="4577"/>
    <lineage>
        <taxon>Eukaryota</taxon>
        <taxon>Viridiplantae</taxon>
        <taxon>Streptophyta</taxon>
        <taxon>Embryophyta</taxon>
        <taxon>Tracheophyta</taxon>
        <taxon>Spermatophyta</taxon>
        <taxon>Magnoliopsida</taxon>
        <taxon>Liliopsida</taxon>
        <taxon>Poales</taxon>
        <taxon>Poaceae</taxon>
        <taxon>PACMAD clade</taxon>
        <taxon>Panicoideae</taxon>
        <taxon>Andropogonodae</taxon>
        <taxon>Andropogoneae</taxon>
        <taxon>Tripsacinae</taxon>
        <taxon>Zea</taxon>
    </lineage>
</organism>
<protein>
    <recommendedName>
        <fullName evidence="1">Photosystem I P700 chlorophyll a apoprotein A2</fullName>
        <ecNumber evidence="1">1.97.1.12</ecNumber>
    </recommendedName>
    <alternativeName>
        <fullName evidence="1">PSI-B</fullName>
    </alternativeName>
    <alternativeName>
        <fullName evidence="1">PsaB</fullName>
    </alternativeName>
</protein>
<geneLocation type="chloroplast"/>